<reference key="1">
    <citation type="journal article" date="1996" name="Mol. Gen. Genet.">
        <title>NUT1, a major nitrogen regulatory gene in Magnaporthe grisea, is dispensable for pathogenicity.</title>
        <authorList>
            <person name="Froeliger E.H."/>
            <person name="Carpenter B.E."/>
        </authorList>
    </citation>
    <scope>NUCLEOTIDE SEQUENCE [GENOMIC DNA]</scope>
    <source>
        <strain>Guyane 11</strain>
    </source>
</reference>
<reference key="2">
    <citation type="journal article" date="2005" name="Nature">
        <title>The genome sequence of the rice blast fungus Magnaporthe grisea.</title>
        <authorList>
            <person name="Dean R.A."/>
            <person name="Talbot N.J."/>
            <person name="Ebbole D.J."/>
            <person name="Farman M.L."/>
            <person name="Mitchell T.K."/>
            <person name="Orbach M.J."/>
            <person name="Thon M.R."/>
            <person name="Kulkarni R."/>
            <person name="Xu J.-R."/>
            <person name="Pan H."/>
            <person name="Read N.D."/>
            <person name="Lee Y.-H."/>
            <person name="Carbone I."/>
            <person name="Brown D."/>
            <person name="Oh Y.Y."/>
            <person name="Donofrio N."/>
            <person name="Jeong J.S."/>
            <person name="Soanes D.M."/>
            <person name="Djonovic S."/>
            <person name="Kolomiets E."/>
            <person name="Rehmeyer C."/>
            <person name="Li W."/>
            <person name="Harding M."/>
            <person name="Kim S."/>
            <person name="Lebrun M.-H."/>
            <person name="Bohnert H."/>
            <person name="Coughlan S."/>
            <person name="Butler J."/>
            <person name="Calvo S.E."/>
            <person name="Ma L.-J."/>
            <person name="Nicol R."/>
            <person name="Purcell S."/>
            <person name="Nusbaum C."/>
            <person name="Galagan J.E."/>
            <person name="Birren B.W."/>
        </authorList>
    </citation>
    <scope>NUCLEOTIDE SEQUENCE [LARGE SCALE GENOMIC DNA]</scope>
    <source>
        <strain>70-15 / ATCC MYA-4617 / FGSC 8958</strain>
    </source>
</reference>
<feature type="chain" id="PRO_0000083479" description="Nitrogen regulatory protein NUT1">
    <location>
        <begin position="1"/>
        <end position="956"/>
    </location>
</feature>
<feature type="zinc finger region" description="GATA-type" evidence="1">
    <location>
        <begin position="663"/>
        <end position="687"/>
    </location>
</feature>
<feature type="region of interest" description="Disordered" evidence="2">
    <location>
        <begin position="1"/>
        <end position="51"/>
    </location>
</feature>
<feature type="region of interest" description="Disordered" evidence="2">
    <location>
        <begin position="120"/>
        <end position="222"/>
    </location>
</feature>
<feature type="region of interest" description="Disordered" evidence="2">
    <location>
        <begin position="240"/>
        <end position="262"/>
    </location>
</feature>
<feature type="region of interest" description="Disordered" evidence="2">
    <location>
        <begin position="348"/>
        <end position="373"/>
    </location>
</feature>
<feature type="region of interest" description="Disordered" evidence="2">
    <location>
        <begin position="524"/>
        <end position="661"/>
    </location>
</feature>
<feature type="region of interest" description="Disordered" evidence="2">
    <location>
        <begin position="708"/>
        <end position="890"/>
    </location>
</feature>
<feature type="compositionally biased region" description="Basic and acidic residues" evidence="2">
    <location>
        <begin position="1"/>
        <end position="12"/>
    </location>
</feature>
<feature type="compositionally biased region" description="Low complexity" evidence="2">
    <location>
        <begin position="15"/>
        <end position="37"/>
    </location>
</feature>
<feature type="compositionally biased region" description="Polar residues" evidence="2">
    <location>
        <begin position="42"/>
        <end position="51"/>
    </location>
</feature>
<feature type="compositionally biased region" description="Polar residues" evidence="2">
    <location>
        <begin position="131"/>
        <end position="153"/>
    </location>
</feature>
<feature type="compositionally biased region" description="Polar residues" evidence="2">
    <location>
        <begin position="167"/>
        <end position="194"/>
    </location>
</feature>
<feature type="compositionally biased region" description="Polar residues" evidence="2">
    <location>
        <begin position="208"/>
        <end position="217"/>
    </location>
</feature>
<feature type="compositionally biased region" description="Polar residues" evidence="2">
    <location>
        <begin position="588"/>
        <end position="613"/>
    </location>
</feature>
<feature type="compositionally biased region" description="Low complexity" evidence="2">
    <location>
        <begin position="623"/>
        <end position="633"/>
    </location>
</feature>
<feature type="compositionally biased region" description="Low complexity" evidence="2">
    <location>
        <begin position="640"/>
        <end position="661"/>
    </location>
</feature>
<feature type="compositionally biased region" description="Polar residues" evidence="2">
    <location>
        <begin position="713"/>
        <end position="760"/>
    </location>
</feature>
<feature type="compositionally biased region" description="Low complexity" evidence="2">
    <location>
        <begin position="812"/>
        <end position="839"/>
    </location>
</feature>
<feature type="compositionally biased region" description="Polar residues" evidence="2">
    <location>
        <begin position="849"/>
        <end position="863"/>
    </location>
</feature>
<feature type="compositionally biased region" description="Polar residues" evidence="2">
    <location>
        <begin position="872"/>
        <end position="881"/>
    </location>
</feature>
<evidence type="ECO:0000255" key="1">
    <source>
        <dbReference type="PROSITE-ProRule" id="PRU00094"/>
    </source>
</evidence>
<evidence type="ECO:0000256" key="2">
    <source>
        <dbReference type="SAM" id="MobiDB-lite"/>
    </source>
</evidence>
<accession>Q01168</accession>
<accession>A4RBX4</accession>
<accession>G4NJ39</accession>
<accession>Q2KG31</accession>
<sequence>MNPTITEHDFRFPRRPAAPGRDPGSDSSDDPLPASLRELNSDRQSAFNDAQNKLARTEAFEDLRNGMARVKDTPELLQEQDPLAAQVWRFFSKTKTMLPNQERMENLTWRMMHVNLRKRQQEESARISSPPLKTNAPSGIAQQLRQTPTQKKSSAGEMSLDDFIDSSHGSATSGLASSSPEAGKPDSTSTNAISSAIPINKSRKNEVAAQSQFNPQSVPAAAQRGRMDNEFGYLKRHHRKTSIDDRKTTRKRPRGCSPFQVPSIVTDTLSNDLDADAGFNDYTLDSTNGINVSQPMTTNGRSPFTIDAFNVPSEPMIHSAGPYQQNFSFSPSTSPMASNGFPQHMFNGQSITNSLANPDLYSPPGSAYQSQVSTPHPMNENGDGSFFFGNGMDVRHQRSHSFRQPSATQNMQTQPFSYNGNGGGGFFPQSMASNGMSSSYATSGNTFGHIDPAQVFQNEQTAQSPGFNMMQENNAFNFGGHSDDEEDGGVFADRNLALSSEFSPGAMDEPAVDFGTNPMGWDATLPGNFSTQAARYPAGPPRRQNTIGGMPSEFGEKNGDYAEGGLARSQSQSFHGNQADARRRIPRNASTTAIPNSQMQYEQQGVQGHTNSPPADMANGHTSGFSSVVHSRPSSPPPGSKNGSTTNLQQQGNNQGGDAPTTCTNCATQTTPLWRRNPEGQPLCNACGLFLKLHGVVRPLSLKTDVIKKRNRGSGSNVPGATSGSRSKKGATSTAVSGTNTRKNSSLAISRTASTTNVQVAPTPAIAPAASQSRAGSANEGESPMSGGGNTAGSTPTSHNSGGSVAVGGKGVVPIAAAPPKNMPGPGAAAAARTVALGPKRQRRHSKPSPANASLIGMNNANHSDAMEVDSPENSTGSNEAATRPSGFGTTATSASFAGLTSNSFGMSASTRSMITPGMLGGGMSTSALSSTGGLLSSGSAAATVPQEWDWLTMSL</sequence>
<dbReference type="EMBL" id="U60290">
    <property type="protein sequence ID" value="AAB03415.1"/>
    <property type="molecule type" value="Genomic_DNA"/>
</dbReference>
<dbReference type="EMBL" id="CM000230">
    <property type="protein sequence ID" value="EAQ71097.1"/>
    <property type="molecule type" value="Genomic_DNA"/>
</dbReference>
<dbReference type="EMBL" id="CM001237">
    <property type="protein sequence ID" value="EHA46255.1"/>
    <property type="molecule type" value="Genomic_DNA"/>
</dbReference>
<dbReference type="RefSeq" id="XP_003720998.1">
    <property type="nucleotide sequence ID" value="XM_003720950.1"/>
</dbReference>
<dbReference type="SMR" id="Q01168"/>
<dbReference type="STRING" id="242507.Q01168"/>
<dbReference type="EnsemblFungi" id="MGG_02755T0">
    <property type="protein sequence ID" value="MGG_02755T0"/>
    <property type="gene ID" value="MGG_02755"/>
</dbReference>
<dbReference type="GeneID" id="2682760"/>
<dbReference type="KEGG" id="mgr:MGG_02755"/>
<dbReference type="VEuPathDB" id="FungiDB:MGG_02755"/>
<dbReference type="eggNOG" id="KOG1601">
    <property type="taxonomic scope" value="Eukaryota"/>
</dbReference>
<dbReference type="HOGENOM" id="CLU_009509_0_0_1"/>
<dbReference type="InParanoid" id="Q01168"/>
<dbReference type="OMA" id="WRMMAMS"/>
<dbReference type="OrthoDB" id="515401at2759"/>
<dbReference type="PHI-base" id="PHI:2992"/>
<dbReference type="PHI-base" id="PHI:52"/>
<dbReference type="Proteomes" id="UP000009058">
    <property type="component" value="Chromosome 7"/>
</dbReference>
<dbReference type="GO" id="GO:0005634">
    <property type="term" value="C:nucleus"/>
    <property type="evidence" value="ECO:0007669"/>
    <property type="project" value="UniProtKB-SubCell"/>
</dbReference>
<dbReference type="GO" id="GO:0000981">
    <property type="term" value="F:DNA-binding transcription factor activity, RNA polymerase II-specific"/>
    <property type="evidence" value="ECO:0007669"/>
    <property type="project" value="TreeGrafter"/>
</dbReference>
<dbReference type="GO" id="GO:0000978">
    <property type="term" value="F:RNA polymerase II cis-regulatory region sequence-specific DNA binding"/>
    <property type="evidence" value="ECO:0007669"/>
    <property type="project" value="TreeGrafter"/>
</dbReference>
<dbReference type="GO" id="GO:0008270">
    <property type="term" value="F:zinc ion binding"/>
    <property type="evidence" value="ECO:0007669"/>
    <property type="project" value="UniProtKB-KW"/>
</dbReference>
<dbReference type="GO" id="GO:0000122">
    <property type="term" value="P:negative regulation of transcription by RNA polymerase II"/>
    <property type="evidence" value="ECO:0007669"/>
    <property type="project" value="TreeGrafter"/>
</dbReference>
<dbReference type="GO" id="GO:0042128">
    <property type="term" value="P:nitrate assimilation"/>
    <property type="evidence" value="ECO:0007669"/>
    <property type="project" value="UniProtKB-KW"/>
</dbReference>
<dbReference type="GO" id="GO:0045944">
    <property type="term" value="P:positive regulation of transcription by RNA polymerase II"/>
    <property type="evidence" value="ECO:0007669"/>
    <property type="project" value="TreeGrafter"/>
</dbReference>
<dbReference type="CDD" id="cd00202">
    <property type="entry name" value="ZnF_GATA"/>
    <property type="match status" value="1"/>
</dbReference>
<dbReference type="FunFam" id="3.30.50.10:FF:000007">
    <property type="entry name" value="Nitrogen regulatory AreA, N-terminal"/>
    <property type="match status" value="1"/>
</dbReference>
<dbReference type="Gene3D" id="3.30.50.10">
    <property type="entry name" value="Erythroid Transcription Factor GATA-1, subunit A"/>
    <property type="match status" value="1"/>
</dbReference>
<dbReference type="InterPro" id="IPR013860">
    <property type="entry name" value="AreA_GATA"/>
</dbReference>
<dbReference type="InterPro" id="IPR039355">
    <property type="entry name" value="Transcription_factor_GATA"/>
</dbReference>
<dbReference type="InterPro" id="IPR000679">
    <property type="entry name" value="Znf_GATA"/>
</dbReference>
<dbReference type="InterPro" id="IPR013088">
    <property type="entry name" value="Znf_NHR/GATA"/>
</dbReference>
<dbReference type="PANTHER" id="PTHR10071:SF281">
    <property type="entry name" value="BOX A-BINDING FACTOR-RELATED"/>
    <property type="match status" value="1"/>
</dbReference>
<dbReference type="PANTHER" id="PTHR10071">
    <property type="entry name" value="TRANSCRIPTION FACTOR GATA FAMILY MEMBER"/>
    <property type="match status" value="1"/>
</dbReference>
<dbReference type="Pfam" id="PF00320">
    <property type="entry name" value="GATA"/>
    <property type="match status" value="1"/>
</dbReference>
<dbReference type="Pfam" id="PF08550">
    <property type="entry name" value="GATA_AreA"/>
    <property type="match status" value="1"/>
</dbReference>
<dbReference type="PRINTS" id="PR00619">
    <property type="entry name" value="GATAZNFINGER"/>
</dbReference>
<dbReference type="SMART" id="SM00401">
    <property type="entry name" value="ZnF_GATA"/>
    <property type="match status" value="1"/>
</dbReference>
<dbReference type="SUPFAM" id="SSF57716">
    <property type="entry name" value="Glucocorticoid receptor-like (DNA-binding domain)"/>
    <property type="match status" value="1"/>
</dbReference>
<dbReference type="PROSITE" id="PS00344">
    <property type="entry name" value="GATA_ZN_FINGER_1"/>
    <property type="match status" value="1"/>
</dbReference>
<dbReference type="PROSITE" id="PS50114">
    <property type="entry name" value="GATA_ZN_FINGER_2"/>
    <property type="match status" value="1"/>
</dbReference>
<gene>
    <name type="primary">NUT1</name>
    <name type="ORF">MGCH7_ch7g504</name>
    <name type="ORF">MGG_02755</name>
</gene>
<organism>
    <name type="scientific">Pyricularia oryzae (strain 70-15 / ATCC MYA-4617 / FGSC 8958)</name>
    <name type="common">Rice blast fungus</name>
    <name type="synonym">Magnaporthe oryzae</name>
    <dbReference type="NCBI Taxonomy" id="242507"/>
    <lineage>
        <taxon>Eukaryota</taxon>
        <taxon>Fungi</taxon>
        <taxon>Dikarya</taxon>
        <taxon>Ascomycota</taxon>
        <taxon>Pezizomycotina</taxon>
        <taxon>Sordariomycetes</taxon>
        <taxon>Sordariomycetidae</taxon>
        <taxon>Magnaporthales</taxon>
        <taxon>Pyriculariaceae</taxon>
        <taxon>Pyricularia</taxon>
    </lineage>
</organism>
<comment type="function">
    <text>Major nitrogen regulatory protein; activates expression of nitrogen-regulated genes.</text>
</comment>
<comment type="subcellular location">
    <subcellularLocation>
        <location>Nucleus</location>
    </subcellularLocation>
</comment>
<proteinExistence type="predicted"/>
<name>NUT1_PYRO7</name>
<keyword id="KW-0010">Activator</keyword>
<keyword id="KW-0238">DNA-binding</keyword>
<keyword id="KW-0479">Metal-binding</keyword>
<keyword id="KW-0534">Nitrate assimilation</keyword>
<keyword id="KW-0539">Nucleus</keyword>
<keyword id="KW-1185">Reference proteome</keyword>
<keyword id="KW-0804">Transcription</keyword>
<keyword id="KW-0805">Transcription regulation</keyword>
<keyword id="KW-0862">Zinc</keyword>
<keyword id="KW-0863">Zinc-finger</keyword>
<protein>
    <recommendedName>
        <fullName>Nitrogen regulatory protein NUT1</fullName>
    </recommendedName>
</protein>